<sequence>MARTKQTARKSTGGKAPRKQLATKAARKSAPSTGGVKKPHRYRPGTVALREIRRYQKSTELLIRKLPFQRLVREIAQDFKTDLRFQSAAIGALQEASEAYLVGLFEDTNLCAIHAKRVTIMPKDIQLARRIRGERA</sequence>
<organism>
    <name type="scientific">Drosophila melanogaster</name>
    <name type="common">Fruit fly</name>
    <dbReference type="NCBI Taxonomy" id="7227"/>
    <lineage>
        <taxon>Eukaryota</taxon>
        <taxon>Metazoa</taxon>
        <taxon>Ecdysozoa</taxon>
        <taxon>Arthropoda</taxon>
        <taxon>Hexapoda</taxon>
        <taxon>Insecta</taxon>
        <taxon>Pterygota</taxon>
        <taxon>Neoptera</taxon>
        <taxon>Endopterygota</taxon>
        <taxon>Diptera</taxon>
        <taxon>Brachycera</taxon>
        <taxon>Muscomorpha</taxon>
        <taxon>Ephydroidea</taxon>
        <taxon>Drosophilidae</taxon>
        <taxon>Drosophila</taxon>
        <taxon>Sophophora</taxon>
    </lineage>
</organism>
<name>H33A_DROME</name>
<proteinExistence type="evidence at protein level"/>
<keyword id="KW-0007">Acetylation</keyword>
<keyword id="KW-0158">Chromosome</keyword>
<keyword id="KW-0238">DNA-binding</keyword>
<keyword id="KW-0488">Methylation</keyword>
<keyword id="KW-0544">Nucleosome core</keyword>
<keyword id="KW-0539">Nucleus</keyword>
<keyword id="KW-0597">Phosphoprotein</keyword>
<keyword id="KW-1185">Reference proteome</keyword>
<protein>
    <recommendedName>
        <fullName evidence="13">Histone H3.3A</fullName>
    </recommendedName>
    <alternativeName>
        <fullName evidence="16">H3.A</fullName>
    </alternativeName>
</protein>
<accession>C0HL66</accession>
<accession>A4V466</accession>
<accession>E2QCP0</accession>
<accession>P06351</accession>
<accession>P33155</accession>
<accession>P84249</accession>
<accession>Q9V3W4</accession>
<gene>
    <name evidence="13 16" type="primary">His3.3A</name>
    <name evidence="16" type="ORF">CG5825</name>
</gene>
<reference key="1">
    <citation type="journal article" date="1995" name="Genome">
        <title>Structure and expression of histone H3.3 genes in Drosophila melanogaster and Drosophila hydei.</title>
        <authorList>
            <person name="Akhmanova A.S."/>
            <person name="Bindels P.S.T."/>
            <person name="Xu J."/>
            <person name="Miedema K."/>
            <person name="Kremer H."/>
            <person name="Hennig W."/>
        </authorList>
    </citation>
    <scope>NUCLEOTIDE SEQUENCE [MRNA]</scope>
    <scope>TISSUE SPECIFICITY</scope>
    <source>
        <strain>Canton-S</strain>
    </source>
</reference>
<reference key="2">
    <citation type="journal article" date="2000" name="Science">
        <title>The genome sequence of Drosophila melanogaster.</title>
        <authorList>
            <person name="Adams M.D."/>
            <person name="Celniker S.E."/>
            <person name="Holt R.A."/>
            <person name="Evans C.A."/>
            <person name="Gocayne J.D."/>
            <person name="Amanatides P.G."/>
            <person name="Scherer S.E."/>
            <person name="Li P.W."/>
            <person name="Hoskins R.A."/>
            <person name="Galle R.F."/>
            <person name="George R.A."/>
            <person name="Lewis S.E."/>
            <person name="Richards S."/>
            <person name="Ashburner M."/>
            <person name="Henderson S.N."/>
            <person name="Sutton G.G."/>
            <person name="Wortman J.R."/>
            <person name="Yandell M.D."/>
            <person name="Zhang Q."/>
            <person name="Chen L.X."/>
            <person name="Brandon R.C."/>
            <person name="Rogers Y.-H.C."/>
            <person name="Blazej R.G."/>
            <person name="Champe M."/>
            <person name="Pfeiffer B.D."/>
            <person name="Wan K.H."/>
            <person name="Doyle C."/>
            <person name="Baxter E.G."/>
            <person name="Helt G."/>
            <person name="Nelson C.R."/>
            <person name="Miklos G.L.G."/>
            <person name="Abril J.F."/>
            <person name="Agbayani A."/>
            <person name="An H.-J."/>
            <person name="Andrews-Pfannkoch C."/>
            <person name="Baldwin D."/>
            <person name="Ballew R.M."/>
            <person name="Basu A."/>
            <person name="Baxendale J."/>
            <person name="Bayraktaroglu L."/>
            <person name="Beasley E.M."/>
            <person name="Beeson K.Y."/>
            <person name="Benos P.V."/>
            <person name="Berman B.P."/>
            <person name="Bhandari D."/>
            <person name="Bolshakov S."/>
            <person name="Borkova D."/>
            <person name="Botchan M.R."/>
            <person name="Bouck J."/>
            <person name="Brokstein P."/>
            <person name="Brottier P."/>
            <person name="Burtis K.C."/>
            <person name="Busam D.A."/>
            <person name="Butler H."/>
            <person name="Cadieu E."/>
            <person name="Center A."/>
            <person name="Chandra I."/>
            <person name="Cherry J.M."/>
            <person name="Cawley S."/>
            <person name="Dahlke C."/>
            <person name="Davenport L.B."/>
            <person name="Davies P."/>
            <person name="de Pablos B."/>
            <person name="Delcher A."/>
            <person name="Deng Z."/>
            <person name="Mays A.D."/>
            <person name="Dew I."/>
            <person name="Dietz S.M."/>
            <person name="Dodson K."/>
            <person name="Doup L.E."/>
            <person name="Downes M."/>
            <person name="Dugan-Rocha S."/>
            <person name="Dunkov B.C."/>
            <person name="Dunn P."/>
            <person name="Durbin K.J."/>
            <person name="Evangelista C.C."/>
            <person name="Ferraz C."/>
            <person name="Ferriera S."/>
            <person name="Fleischmann W."/>
            <person name="Fosler C."/>
            <person name="Gabrielian A.E."/>
            <person name="Garg N.S."/>
            <person name="Gelbart W.M."/>
            <person name="Glasser K."/>
            <person name="Glodek A."/>
            <person name="Gong F."/>
            <person name="Gorrell J.H."/>
            <person name="Gu Z."/>
            <person name="Guan P."/>
            <person name="Harris M."/>
            <person name="Harris N.L."/>
            <person name="Harvey D.A."/>
            <person name="Heiman T.J."/>
            <person name="Hernandez J.R."/>
            <person name="Houck J."/>
            <person name="Hostin D."/>
            <person name="Houston K.A."/>
            <person name="Howland T.J."/>
            <person name="Wei M.-H."/>
            <person name="Ibegwam C."/>
            <person name="Jalali M."/>
            <person name="Kalush F."/>
            <person name="Karpen G.H."/>
            <person name="Ke Z."/>
            <person name="Kennison J.A."/>
            <person name="Ketchum K.A."/>
            <person name="Kimmel B.E."/>
            <person name="Kodira C.D."/>
            <person name="Kraft C.L."/>
            <person name="Kravitz S."/>
            <person name="Kulp D."/>
            <person name="Lai Z."/>
            <person name="Lasko P."/>
            <person name="Lei Y."/>
            <person name="Levitsky A.A."/>
            <person name="Li J.H."/>
            <person name="Li Z."/>
            <person name="Liang Y."/>
            <person name="Lin X."/>
            <person name="Liu X."/>
            <person name="Mattei B."/>
            <person name="McIntosh T.C."/>
            <person name="McLeod M.P."/>
            <person name="McPherson D."/>
            <person name="Merkulov G."/>
            <person name="Milshina N.V."/>
            <person name="Mobarry C."/>
            <person name="Morris J."/>
            <person name="Moshrefi A."/>
            <person name="Mount S.M."/>
            <person name="Moy M."/>
            <person name="Murphy B."/>
            <person name="Murphy L."/>
            <person name="Muzny D.M."/>
            <person name="Nelson D.L."/>
            <person name="Nelson D.R."/>
            <person name="Nelson K.A."/>
            <person name="Nixon K."/>
            <person name="Nusskern D.R."/>
            <person name="Pacleb J.M."/>
            <person name="Palazzolo M."/>
            <person name="Pittman G.S."/>
            <person name="Pan S."/>
            <person name="Pollard J."/>
            <person name="Puri V."/>
            <person name="Reese M.G."/>
            <person name="Reinert K."/>
            <person name="Remington K."/>
            <person name="Saunders R.D.C."/>
            <person name="Scheeler F."/>
            <person name="Shen H."/>
            <person name="Shue B.C."/>
            <person name="Siden-Kiamos I."/>
            <person name="Simpson M."/>
            <person name="Skupski M.P."/>
            <person name="Smith T.J."/>
            <person name="Spier E."/>
            <person name="Spradling A.C."/>
            <person name="Stapleton M."/>
            <person name="Strong R."/>
            <person name="Sun E."/>
            <person name="Svirskas R."/>
            <person name="Tector C."/>
            <person name="Turner R."/>
            <person name="Venter E."/>
            <person name="Wang A.H."/>
            <person name="Wang X."/>
            <person name="Wang Z.-Y."/>
            <person name="Wassarman D.A."/>
            <person name="Weinstock G.M."/>
            <person name="Weissenbach J."/>
            <person name="Williams S.M."/>
            <person name="Woodage T."/>
            <person name="Worley K.C."/>
            <person name="Wu D."/>
            <person name="Yang S."/>
            <person name="Yao Q.A."/>
            <person name="Ye J."/>
            <person name="Yeh R.-F."/>
            <person name="Zaveri J.S."/>
            <person name="Zhan M."/>
            <person name="Zhang G."/>
            <person name="Zhao Q."/>
            <person name="Zheng L."/>
            <person name="Zheng X.H."/>
            <person name="Zhong F.N."/>
            <person name="Zhong W."/>
            <person name="Zhou X."/>
            <person name="Zhu S.C."/>
            <person name="Zhu X."/>
            <person name="Smith H.O."/>
            <person name="Gibbs R.A."/>
            <person name="Myers E.W."/>
            <person name="Rubin G.M."/>
            <person name="Venter J.C."/>
        </authorList>
    </citation>
    <scope>NUCLEOTIDE SEQUENCE [LARGE SCALE GENOMIC DNA]</scope>
    <source>
        <strain>Berkeley</strain>
    </source>
</reference>
<reference key="3">
    <citation type="journal article" date="2002" name="Genome Biol.">
        <title>Annotation of the Drosophila melanogaster euchromatic genome: a systematic review.</title>
        <authorList>
            <person name="Misra S."/>
            <person name="Crosby M.A."/>
            <person name="Mungall C.J."/>
            <person name="Matthews B.B."/>
            <person name="Campbell K.S."/>
            <person name="Hradecky P."/>
            <person name="Huang Y."/>
            <person name="Kaminker J.S."/>
            <person name="Millburn G.H."/>
            <person name="Prochnik S.E."/>
            <person name="Smith C.D."/>
            <person name="Tupy J.L."/>
            <person name="Whitfield E.J."/>
            <person name="Bayraktaroglu L."/>
            <person name="Berman B.P."/>
            <person name="Bettencourt B.R."/>
            <person name="Celniker S.E."/>
            <person name="de Grey A.D.N.J."/>
            <person name="Drysdale R.A."/>
            <person name="Harris N.L."/>
            <person name="Richter J."/>
            <person name="Russo S."/>
            <person name="Schroeder A.J."/>
            <person name="Shu S.Q."/>
            <person name="Stapleton M."/>
            <person name="Yamada C."/>
            <person name="Ashburner M."/>
            <person name="Gelbart W.M."/>
            <person name="Rubin G.M."/>
            <person name="Lewis S.E."/>
        </authorList>
    </citation>
    <scope>GENOME REANNOTATION</scope>
    <source>
        <strain>Berkeley</strain>
    </source>
</reference>
<reference key="4">
    <citation type="journal article" date="2002" name="Genome Biol.">
        <title>A Drosophila full-length cDNA resource.</title>
        <authorList>
            <person name="Stapleton M."/>
            <person name="Carlson J.W."/>
            <person name="Brokstein P."/>
            <person name="Yu C."/>
            <person name="Champe M."/>
            <person name="George R.A."/>
            <person name="Guarin H."/>
            <person name="Kronmiller B."/>
            <person name="Pacleb J.M."/>
            <person name="Park S."/>
            <person name="Wan K.H."/>
            <person name="Rubin G.M."/>
            <person name="Celniker S.E."/>
        </authorList>
    </citation>
    <scope>NUCLEOTIDE SEQUENCE [LARGE SCALE MRNA]</scope>
    <source>
        <strain>Berkeley</strain>
        <tissue>Embryo</tissue>
    </source>
</reference>
<reference evidence="15" key="5">
    <citation type="submission" date="2016-07" db="EMBL/GenBank/DDBJ databases">
        <authorList>
            <person name="Wan K."/>
            <person name="Booth B."/>
            <person name="Spirohn K."/>
            <person name="Hao T."/>
            <person name="Hu Y."/>
            <person name="Calderwood M."/>
            <person name="Hill D."/>
            <person name="Mohr S."/>
            <person name="Vidal M."/>
            <person name="Celniker S."/>
            <person name="Perrimon N."/>
        </authorList>
    </citation>
    <scope>NUCLEOTIDE SEQUENCE [LARGE SCALE MRNA]</scope>
    <source>
        <strain evidence="15">Berkeley</strain>
    </source>
</reference>
<reference key="6">
    <citation type="journal article" date="2000" name="Genes Dev.">
        <title>Phosphorylation of histone H3 correlates with transcriptionally active loci.</title>
        <authorList>
            <person name="Nowak S.J."/>
            <person name="Corces V.G."/>
        </authorList>
    </citation>
    <scope>PHOSPHORYLATION AT SER-11</scope>
    <scope>ACETYLATION AT LYS-10 AND LYS-15</scope>
</reference>
<reference key="7">
    <citation type="journal article" date="2001" name="Cell">
        <title>The JIL-1 tandem kinase mediates histone H3 phosphorylation and is required for maintenance of chromatin structure in Drosophila.</title>
        <authorList>
            <person name="Wang Y."/>
            <person name="Zhang W."/>
            <person name="Jin Y."/>
            <person name="Johansen J."/>
            <person name="Johansen K.M."/>
        </authorList>
    </citation>
    <scope>PHOSPHORYLATION AT SER-11</scope>
    <scope>ACETYLATION AT LYS-15</scope>
</reference>
<reference key="8">
    <citation type="journal article" date="2001" name="J. Cell Biol.">
        <title>Drosophila aurora B kinase is required for histone H3 phosphorylation and condensin recruitment during chromosome condensation and to organize the central spindle during cytokinesis.</title>
        <authorList>
            <person name="Giet R."/>
            <person name="Glover D.M."/>
        </authorList>
    </citation>
    <scope>PHOSPHORYLATION AT SER-11</scope>
</reference>
<reference key="9">
    <citation type="journal article" date="2003" name="Genes Dev.">
        <title>Phosphorylation of histone H3 during transcriptional activation depends on promoter structure.</title>
        <authorList>
            <person name="Labrador M."/>
            <person name="Corces V.G."/>
        </authorList>
    </citation>
    <scope>PHOSPHORYLATION AT SER-11</scope>
</reference>
<reference key="10">
    <citation type="journal article" date="2004" name="Proc. Natl. Acad. Sci. U.S.A.">
        <title>Histone H3.3 is enriched in covalent modifications associated with active chromatin.</title>
        <authorList>
            <person name="McKittrick E."/>
            <person name="Gafken P.R."/>
            <person name="Ahmad K."/>
            <person name="Henikoff S."/>
        </authorList>
    </citation>
    <scope>FUNCTION</scope>
    <scope>METHYLATION AT LYS-5; LYS-10; LYS-15; LYS-28; LYS-37; LYS-38 AND LYS-80</scope>
    <scope>ACETYLATION AT LYS-10; LYS-15; LYS-19 AND LYS-24</scope>
    <scope>IDENTIFICATION BY MASS SPECTROMETRY</scope>
</reference>
<reference key="11">
    <citation type="journal article" date="2005" name="Genetics">
        <title>Characterization of the grappa gene, the Drosophila histone H3 lysine 79 methyltransferase.</title>
        <authorList>
            <person name="Shanower G.A."/>
            <person name="Mueller M."/>
            <person name="Blanton J.L."/>
            <person name="Honti V."/>
            <person name="Gyurkovics H."/>
            <person name="Schedl P."/>
        </authorList>
    </citation>
    <scope>METHYLATION AT LYS-80</scope>
</reference>
<reference key="12">
    <citation type="journal article" date="2012" name="Mol. Cell. Proteomics">
        <title>Lysine succinylation and lysine malonylation in histones.</title>
        <authorList>
            <person name="Xie Z."/>
            <person name="Dai J."/>
            <person name="Dai L."/>
            <person name="Tan M."/>
            <person name="Cheng Z."/>
            <person name="Wu Y."/>
            <person name="Boeke J.D."/>
            <person name="Zhao Y."/>
        </authorList>
    </citation>
    <scope>SUCCINYLATION AT LYS-57 AND LYS-80</scope>
</reference>
<reference key="13">
    <citation type="journal article" date="2017" name="Mol. Cell. Biol.">
        <title>The Drosophila DAXX-Like Protein (DLP) Cooperates with ASF1 for H3.3 Deposition and Heterochromatin Formation.</title>
        <authorList>
            <person name="Fromental-Ramain C."/>
            <person name="Ramain P."/>
            <person name="Hamiche A."/>
        </authorList>
    </citation>
    <scope>INTERACTION WITH DAXX</scope>
</reference>
<reference key="14">
    <citation type="journal article" date="2023" name="PLoS Genet.">
        <title>The histone chaperone NASP maintains H3-H4 reservoirs in the early Drosophila embryo.</title>
        <authorList>
            <person name="Tirgar R."/>
            <person name="Davies J.P."/>
            <person name="Plate L."/>
            <person name="Nordman J.T."/>
        </authorList>
    </citation>
    <scope>INTERACTION WITH NASP</scope>
</reference>
<evidence type="ECO:0000250" key="1"/>
<evidence type="ECO:0000256" key="2">
    <source>
        <dbReference type="SAM" id="MobiDB-lite"/>
    </source>
</evidence>
<evidence type="ECO:0000269" key="3">
    <source>
    </source>
</evidence>
<evidence type="ECO:0000269" key="4">
    <source>
    </source>
</evidence>
<evidence type="ECO:0000269" key="5">
    <source>
    </source>
</evidence>
<evidence type="ECO:0000269" key="6">
    <source>
    </source>
</evidence>
<evidence type="ECO:0000269" key="7">
    <source>
    </source>
</evidence>
<evidence type="ECO:0000269" key="8">
    <source>
    </source>
</evidence>
<evidence type="ECO:0000269" key="9">
    <source>
    </source>
</evidence>
<evidence type="ECO:0000269" key="10">
    <source>
    </source>
</evidence>
<evidence type="ECO:0000269" key="11">
    <source>
    </source>
</evidence>
<evidence type="ECO:0000269" key="12">
    <source>
    </source>
</evidence>
<evidence type="ECO:0000303" key="13">
    <source>
    </source>
</evidence>
<evidence type="ECO:0000305" key="14"/>
<evidence type="ECO:0000312" key="15">
    <source>
        <dbReference type="EMBL" id="ANY27147.1"/>
    </source>
</evidence>
<evidence type="ECO:0000312" key="16">
    <source>
        <dbReference type="FlyBase" id="FBgn0014857"/>
    </source>
</evidence>
<comment type="function">
    <text evidence="7">Variant histone H3 which replaces conventional H3 in a wide range of nucleosomes in active genes and is specifically enriched in modifications associated with active chromatin. Constitutes the predominant form of histone H3 in non-dividing cells and is incorporated into chromatin independently of DNA synthesis. Deposited at sites of nucleosomal displacement throughout transcribed genes, suggesting that it represents an epigenetic imprint of transcriptionally active chromatin. Nucleosomes wrap and compact DNA into chromatin, limiting DNA accessibility to the cellular machineries which require DNA as a template. Histones thereby play a central role in transcription regulation, DNA repair, DNA replication and chromosomal stability. DNA accessibility is regulated via a complex set of post-translational modifications of histones, also called histone code, and nucleosome remodeling.</text>
</comment>
<comment type="subunit">
    <text evidence="10 11">The nucleosome is a histone octamer containing two molecules each of H2A, H2B, H3 and H4 assembled in one H3-H4 heterotetramer and two H2A-H2B heterodimers. The octamer wraps approximately 147 bp of DNA. Interacts with Daxx (via C-terminus) (PubMed:28320872). Interacts with Nasp (PubMed:36930688).</text>
</comment>
<comment type="subcellular location">
    <subcellularLocation>
        <location evidence="1">Nucleus</location>
    </subcellularLocation>
    <subcellularLocation>
        <location evidence="1">Chromosome</location>
    </subcellularLocation>
</comment>
<comment type="tissue specificity">
    <text evidence="12">High levels of expression in ovaries and relatively weak expression in the testes. Highest levels of expression in embryos.</text>
</comment>
<comment type="PTM">
    <text evidence="3 4 5 6">Phosphorylation at Ser-11 by aurB/ial during mitosis and meiosis is crucial for chromosome condensation and cell-cycle progression. Phosphorylation at Ser-11 by JIL-1 during interphase is linked to gene activation and restricts the formation of heterochromatin at inappropriate sites. Phosphorylation at Ser-11 is enriched on male X chromosome compared to the autosome.</text>
</comment>
<comment type="PTM">
    <text evidence="3 5 7">Acetylation is generally linked to gene activation. Acetylated on Lys-15 during prophase I of meiosis. Phosphorylation of H2A 'Thr-119' is a prerequisite for H3 Lys-15 acetylation. Acetylation on Lys-15 is enriched on male X chromosome compared to the autosome.</text>
</comment>
<comment type="PTM">
    <text evidence="7 8">Methylation at Lys-5 or Lys-80 is generally associated with active chromatin. Methylation at Lys-80 by gpp occurs at low levels in specific developmental stages and tissues undergoing active cell division, and at highest levels in epidermal cells undergoing differentiation.</text>
</comment>
<comment type="miscellaneous">
    <text>This histone is the predominant form in non-dividing cells.</text>
</comment>
<comment type="similarity">
    <text evidence="14">Belongs to the histone H3 family.</text>
</comment>
<feature type="initiator methionine" description="Removed" evidence="1">
    <location>
        <position position="1"/>
    </location>
</feature>
<feature type="chain" id="PRO_0000221302" description="Histone H3.3A">
    <location>
        <begin position="2"/>
        <end position="136"/>
    </location>
</feature>
<feature type="region of interest" description="Disordered" evidence="2">
    <location>
        <begin position="1"/>
        <end position="43"/>
    </location>
</feature>
<feature type="modified residue" description="N6,N6,N6-trimethyllysine; alternate" evidence="7">
    <location>
        <position position="5"/>
    </location>
</feature>
<feature type="modified residue" description="N6,N6-dimethyllysine; alternate" evidence="7">
    <location>
        <position position="5"/>
    </location>
</feature>
<feature type="modified residue" description="N6-methyllysine; alternate" evidence="7">
    <location>
        <position position="5"/>
    </location>
</feature>
<feature type="modified residue" description="N6,N6-dimethyllysine; alternate" evidence="7">
    <location>
        <position position="10"/>
    </location>
</feature>
<feature type="modified residue" description="N6-acetyllysine; alternate" evidence="3 7">
    <location>
        <position position="10"/>
    </location>
</feature>
<feature type="modified residue" description="N6-methyllysine; alternate" evidence="7">
    <location>
        <position position="10"/>
    </location>
</feature>
<feature type="modified residue" description="Phosphoserine" evidence="1">
    <location>
        <position position="11"/>
    </location>
</feature>
<feature type="modified residue" description="N6,N6-dimethyllysine; alternate" evidence="7">
    <location>
        <position position="15"/>
    </location>
</feature>
<feature type="modified residue" description="N6-acetyllysine; alternate" evidence="3 5 7">
    <location>
        <position position="15"/>
    </location>
</feature>
<feature type="modified residue" description="N6-methyllysine; alternate" evidence="7">
    <location>
        <position position="15"/>
    </location>
</feature>
<feature type="modified residue" description="N6-acetyllysine" evidence="7">
    <location>
        <position position="19"/>
    </location>
</feature>
<feature type="modified residue" description="N6-acetyllysine" evidence="7">
    <location>
        <position position="24"/>
    </location>
</feature>
<feature type="modified residue" description="N6,N6,N6-trimethyllysine; alternate" evidence="7">
    <location>
        <position position="28"/>
    </location>
</feature>
<feature type="modified residue" description="N6,N6-dimethyllysine; alternate" evidence="7">
    <location>
        <position position="28"/>
    </location>
</feature>
<feature type="modified residue" description="N6-methyllysine; alternate" evidence="7">
    <location>
        <position position="28"/>
    </location>
</feature>
<feature type="modified residue" description="N6,N6-dimethyllysine; alternate" evidence="7">
    <location>
        <position position="37"/>
    </location>
</feature>
<feature type="modified residue" description="N6-methyllysine; alternate" evidence="7">
    <location>
        <position position="37"/>
    </location>
</feature>
<feature type="modified residue" description="N6,N6-dimethyllysine; alternate" evidence="7">
    <location>
        <position position="38"/>
    </location>
</feature>
<feature type="modified residue" description="N6-methyllysine; alternate" evidence="7">
    <location>
        <position position="38"/>
    </location>
</feature>
<feature type="modified residue" description="N6-succinyllysine" evidence="9">
    <location>
        <position position="57"/>
    </location>
</feature>
<feature type="modified residue" description="N6,N6-dimethyllysine; alternate" evidence="7 8">
    <location>
        <position position="80"/>
    </location>
</feature>
<feature type="modified residue" description="N6-methyllysine; alternate" evidence="7 8">
    <location>
        <position position="80"/>
    </location>
</feature>
<feature type="modified residue" description="N6-succinyllysine; alternate" evidence="9">
    <location>
        <position position="80"/>
    </location>
</feature>
<dbReference type="EMBL" id="X82257">
    <property type="protein sequence ID" value="CAA57712.1"/>
    <property type="molecule type" value="mRNA"/>
</dbReference>
<dbReference type="EMBL" id="AE014134">
    <property type="protein sequence ID" value="AAF52213.1"/>
    <property type="molecule type" value="Genomic_DNA"/>
</dbReference>
<dbReference type="EMBL" id="AE014134">
    <property type="protein sequence ID" value="AAN10526.2"/>
    <property type="molecule type" value="Genomic_DNA"/>
</dbReference>
<dbReference type="EMBL" id="AE014134">
    <property type="protein sequence ID" value="AGB92618.1"/>
    <property type="molecule type" value="Genomic_DNA"/>
</dbReference>
<dbReference type="EMBL" id="AY071057">
    <property type="protein sequence ID" value="AAL48679.1"/>
    <property type="molecule type" value="mRNA"/>
</dbReference>
<dbReference type="EMBL" id="AY119629">
    <property type="protein sequence ID" value="AAM50283.1"/>
    <property type="molecule type" value="mRNA"/>
</dbReference>
<dbReference type="EMBL" id="KX531337">
    <property type="protein sequence ID" value="ANY27147.1"/>
    <property type="molecule type" value="mRNA"/>
</dbReference>
<dbReference type="PIR" id="S61220">
    <property type="entry name" value="S61220"/>
</dbReference>
<dbReference type="RefSeq" id="NP_001260082.1">
    <property type="nucleotide sequence ID" value="NM_001273153.1"/>
</dbReference>
<dbReference type="RefSeq" id="NP_523479.1">
    <property type="nucleotide sequence ID" value="NM_078755.3"/>
</dbReference>
<dbReference type="RefSeq" id="NP_723056.2">
    <property type="nucleotide sequence ID" value="NM_164624.3"/>
</dbReference>
<dbReference type="SMR" id="C0HL66"/>
<dbReference type="FunCoup" id="C0HL66">
    <property type="interactions" value="2127"/>
</dbReference>
<dbReference type="STRING" id="7227.FBpp0305716"/>
<dbReference type="iPTMnet" id="C0HL66"/>
<dbReference type="PaxDb" id="7227-FBpp0078649"/>
<dbReference type="DNASU" id="33736"/>
<dbReference type="EnsemblMetazoa" id="FBtr0071345">
    <property type="protein sequence ID" value="FBpp0071280"/>
    <property type="gene ID" value="FBgn0004828"/>
</dbReference>
<dbReference type="EnsemblMetazoa" id="FBtr0071346">
    <property type="protein sequence ID" value="FBpp0071281"/>
    <property type="gene ID" value="FBgn0004828"/>
</dbReference>
<dbReference type="EnsemblMetazoa" id="FBtr0071347">
    <property type="protein sequence ID" value="FBpp0071282"/>
    <property type="gene ID" value="FBgn0004828"/>
</dbReference>
<dbReference type="EnsemblMetazoa" id="FBtr0079010">
    <property type="protein sequence ID" value="FBpp0078649"/>
    <property type="gene ID" value="FBgn0014857"/>
</dbReference>
<dbReference type="EnsemblMetazoa" id="FBtr0333536">
    <property type="protein sequence ID" value="FBpp0305716"/>
    <property type="gene ID" value="FBgn0014857"/>
</dbReference>
<dbReference type="EnsemblMetazoa" id="FBtr0333537">
    <property type="protein sequence ID" value="FBpp0305717"/>
    <property type="gene ID" value="FBgn0014857"/>
</dbReference>
<dbReference type="EnsemblMetazoa" id="FBtr0340343">
    <property type="protein sequence ID" value="FBpp0309302"/>
    <property type="gene ID" value="FBgn0004828"/>
</dbReference>
<dbReference type="GeneID" id="33736"/>
<dbReference type="KEGG" id="dme:Dmel_CG5825"/>
<dbReference type="KEGG" id="dme:Dmel_CG8989"/>
<dbReference type="AGR" id="FB:FBgn0014857"/>
<dbReference type="CTD" id="31848"/>
<dbReference type="CTD" id="33736"/>
<dbReference type="FlyBase" id="FBgn0014857">
    <property type="gene designation" value="His3.3A"/>
</dbReference>
<dbReference type="VEuPathDB" id="VectorBase:FBgn0004828"/>
<dbReference type="VEuPathDB" id="VectorBase:FBgn0014857"/>
<dbReference type="InParanoid" id="C0HL66"/>
<dbReference type="OMA" id="HIFAEMA"/>
<dbReference type="OrthoDB" id="7942823at2759"/>
<dbReference type="Reactome" id="R-DME-201722">
    <property type="pathway name" value="Formation of the beta-catenin:TCF transactivating complex"/>
</dbReference>
<dbReference type="Reactome" id="R-DME-212300">
    <property type="pathway name" value="PRC2 methylates histones and DNA"/>
</dbReference>
<dbReference type="Reactome" id="R-DME-2559580">
    <property type="pathway name" value="Oxidative Stress Induced Senescence"/>
</dbReference>
<dbReference type="Reactome" id="R-DME-2559582">
    <property type="pathway name" value="Senescence-Associated Secretory Phenotype (SASP)"/>
</dbReference>
<dbReference type="Reactome" id="R-DME-427359">
    <property type="pathway name" value="SIRT1 negatively regulates rRNA expression"/>
</dbReference>
<dbReference type="Reactome" id="R-DME-427413">
    <property type="pathway name" value="NoRC negatively regulates rRNA expression"/>
</dbReference>
<dbReference type="Reactome" id="R-DME-5578749">
    <property type="pathway name" value="Transcriptional regulation by small RNAs"/>
</dbReference>
<dbReference type="Reactome" id="R-DME-5625886">
    <property type="pathway name" value="Activated PKN1 stimulates transcription of AR (androgen receptor) regulated genes KLK2 and KLK3"/>
</dbReference>
<dbReference type="Reactome" id="R-DME-68616">
    <property type="pathway name" value="Assembly of the ORC complex at the origin of replication"/>
</dbReference>
<dbReference type="Reactome" id="R-DME-73772">
    <property type="pathway name" value="RNA Polymerase I Promoter Escape"/>
</dbReference>
<dbReference type="Reactome" id="R-DME-8936459">
    <property type="pathway name" value="RUNX1 regulates genes involved in megakaryocyte differentiation and platelet function"/>
</dbReference>
<dbReference type="Reactome" id="R-DME-9018519">
    <property type="pathway name" value="Estrogen-dependent gene expression"/>
</dbReference>
<dbReference type="Reactome" id="R-DME-983231">
    <property type="pathway name" value="Factors involved in megakaryocyte development and platelet production"/>
</dbReference>
<dbReference type="Reactome" id="R-DME-9841922">
    <property type="pathway name" value="MLL4 and MLL3 complexes regulate expression of PPARG target genes in adipogenesis and hepatic steatosis"/>
</dbReference>
<dbReference type="Reactome" id="R-DME-9843940">
    <property type="pathway name" value="Regulation of endogenous retroelements by KRAB-ZFP proteins"/>
</dbReference>
<dbReference type="PRO" id="PR:C0HL66"/>
<dbReference type="Proteomes" id="UP000000803">
    <property type="component" value="Chromosome 2L"/>
</dbReference>
<dbReference type="Bgee" id="FBgn0004828">
    <property type="expression patterns" value="Expressed in transmedullary neuron Tm3a (Drosophila) in insect head and 292 other cell types or tissues"/>
</dbReference>
<dbReference type="ExpressionAtlas" id="C0HL66">
    <property type="expression patterns" value="baseline and differential"/>
</dbReference>
<dbReference type="GO" id="GO:0000786">
    <property type="term" value="C:nucleosome"/>
    <property type="evidence" value="ECO:0000314"/>
    <property type="project" value="FlyBase"/>
</dbReference>
<dbReference type="GO" id="GO:0005634">
    <property type="term" value="C:nucleus"/>
    <property type="evidence" value="ECO:0000318"/>
    <property type="project" value="GO_Central"/>
</dbReference>
<dbReference type="GO" id="GO:0005700">
    <property type="term" value="C:polytene chromosome"/>
    <property type="evidence" value="ECO:0000314"/>
    <property type="project" value="FlyBase"/>
</dbReference>
<dbReference type="GO" id="GO:0003677">
    <property type="term" value="F:DNA binding"/>
    <property type="evidence" value="ECO:0000303"/>
    <property type="project" value="UniProtKB"/>
</dbReference>
<dbReference type="GO" id="GO:0046982">
    <property type="term" value="F:protein heterodimerization activity"/>
    <property type="evidence" value="ECO:0007669"/>
    <property type="project" value="InterPro"/>
</dbReference>
<dbReference type="GO" id="GO:0030527">
    <property type="term" value="F:structural constituent of chromatin"/>
    <property type="evidence" value="ECO:0000316"/>
    <property type="project" value="FlyBase"/>
</dbReference>
<dbReference type="GO" id="GO:0006334">
    <property type="term" value="P:nucleosome assembly"/>
    <property type="evidence" value="ECO:0000303"/>
    <property type="project" value="UniProtKB"/>
</dbReference>
<dbReference type="CDD" id="cd22911">
    <property type="entry name" value="HFD_H3"/>
    <property type="match status" value="1"/>
</dbReference>
<dbReference type="FunFam" id="1.10.20.10:FF:000078">
    <property type="entry name" value="Histone H3"/>
    <property type="match status" value="1"/>
</dbReference>
<dbReference type="FunFam" id="1.10.20.10:FF:000044">
    <property type="entry name" value="Histone H3.3"/>
    <property type="match status" value="1"/>
</dbReference>
<dbReference type="Gene3D" id="1.10.20.10">
    <property type="entry name" value="Histone, subunit A"/>
    <property type="match status" value="1"/>
</dbReference>
<dbReference type="InterPro" id="IPR009072">
    <property type="entry name" value="Histone-fold"/>
</dbReference>
<dbReference type="InterPro" id="IPR007125">
    <property type="entry name" value="Histone_H2A/H2B/H3"/>
</dbReference>
<dbReference type="InterPro" id="IPR000164">
    <property type="entry name" value="Histone_H3/CENP-A"/>
</dbReference>
<dbReference type="PANTHER" id="PTHR11426">
    <property type="entry name" value="HISTONE H3"/>
    <property type="match status" value="1"/>
</dbReference>
<dbReference type="Pfam" id="PF00125">
    <property type="entry name" value="Histone"/>
    <property type="match status" value="1"/>
</dbReference>
<dbReference type="PRINTS" id="PR00622">
    <property type="entry name" value="HISTONEH3"/>
</dbReference>
<dbReference type="SMART" id="SM00428">
    <property type="entry name" value="H3"/>
    <property type="match status" value="1"/>
</dbReference>
<dbReference type="SUPFAM" id="SSF47113">
    <property type="entry name" value="Histone-fold"/>
    <property type="match status" value="1"/>
</dbReference>
<dbReference type="PROSITE" id="PS00322">
    <property type="entry name" value="HISTONE_H3_1"/>
    <property type="match status" value="1"/>
</dbReference>
<dbReference type="PROSITE" id="PS00959">
    <property type="entry name" value="HISTONE_H3_2"/>
    <property type="match status" value="1"/>
</dbReference>